<reference key="1">
    <citation type="journal article" date="2005" name="Mol. Genet. Genomics">
        <title>A fine physical map of the rice chromosome 5.</title>
        <authorList>
            <person name="Cheng C.-H."/>
            <person name="Chung M.C."/>
            <person name="Liu S.-M."/>
            <person name="Chen S.-K."/>
            <person name="Kao F.Y."/>
            <person name="Lin S.-J."/>
            <person name="Hsiao S.-H."/>
            <person name="Tseng I.C."/>
            <person name="Hsing Y.-I.C."/>
            <person name="Wu H.-P."/>
            <person name="Chen C.-S."/>
            <person name="Shaw J.-F."/>
            <person name="Wu J."/>
            <person name="Matsumoto T."/>
            <person name="Sasaki T."/>
            <person name="Chen H.-C."/>
            <person name="Chow T.-Y."/>
        </authorList>
    </citation>
    <scope>NUCLEOTIDE SEQUENCE [LARGE SCALE GENOMIC DNA]</scope>
    <source>
        <strain>cv. Nipponbare</strain>
    </source>
</reference>
<reference key="2">
    <citation type="journal article" date="2005" name="Nature">
        <title>The map-based sequence of the rice genome.</title>
        <authorList>
            <consortium name="International rice genome sequencing project (IRGSP)"/>
        </authorList>
    </citation>
    <scope>NUCLEOTIDE SEQUENCE [LARGE SCALE GENOMIC DNA]</scope>
    <source>
        <strain>cv. Nipponbare</strain>
    </source>
</reference>
<reference key="3">
    <citation type="journal article" date="2008" name="Nucleic Acids Res.">
        <title>The rice annotation project database (RAP-DB): 2008 update.</title>
        <authorList>
            <consortium name="The rice annotation project (RAP)"/>
        </authorList>
    </citation>
    <scope>GENOME REANNOTATION</scope>
    <source>
        <strain>cv. Nipponbare</strain>
    </source>
</reference>
<reference key="4">
    <citation type="journal article" date="2013" name="Rice">
        <title>Improvement of the Oryza sativa Nipponbare reference genome using next generation sequence and optical map data.</title>
        <authorList>
            <person name="Kawahara Y."/>
            <person name="de la Bastide M."/>
            <person name="Hamilton J.P."/>
            <person name="Kanamori H."/>
            <person name="McCombie W.R."/>
            <person name="Ouyang S."/>
            <person name="Schwartz D.C."/>
            <person name="Tanaka T."/>
            <person name="Wu J."/>
            <person name="Zhou S."/>
            <person name="Childs K.L."/>
            <person name="Davidson R.M."/>
            <person name="Lin H."/>
            <person name="Quesada-Ocampo L."/>
            <person name="Vaillancourt B."/>
            <person name="Sakai H."/>
            <person name="Lee S.S."/>
            <person name="Kim J."/>
            <person name="Numa H."/>
            <person name="Itoh T."/>
            <person name="Buell C.R."/>
            <person name="Matsumoto T."/>
        </authorList>
    </citation>
    <scope>GENOME REANNOTATION</scope>
    <source>
        <strain>cv. Nipponbare</strain>
    </source>
</reference>
<reference key="5">
    <citation type="journal article" date="2005" name="PLoS Biol.">
        <title>The genomes of Oryza sativa: a history of duplications.</title>
        <authorList>
            <person name="Yu J."/>
            <person name="Wang J."/>
            <person name="Lin W."/>
            <person name="Li S."/>
            <person name="Li H."/>
            <person name="Zhou J."/>
            <person name="Ni P."/>
            <person name="Dong W."/>
            <person name="Hu S."/>
            <person name="Zeng C."/>
            <person name="Zhang J."/>
            <person name="Zhang Y."/>
            <person name="Li R."/>
            <person name="Xu Z."/>
            <person name="Li S."/>
            <person name="Li X."/>
            <person name="Zheng H."/>
            <person name="Cong L."/>
            <person name="Lin L."/>
            <person name="Yin J."/>
            <person name="Geng J."/>
            <person name="Li G."/>
            <person name="Shi J."/>
            <person name="Liu J."/>
            <person name="Lv H."/>
            <person name="Li J."/>
            <person name="Wang J."/>
            <person name="Deng Y."/>
            <person name="Ran L."/>
            <person name="Shi X."/>
            <person name="Wang X."/>
            <person name="Wu Q."/>
            <person name="Li C."/>
            <person name="Ren X."/>
            <person name="Wang J."/>
            <person name="Wang X."/>
            <person name="Li D."/>
            <person name="Liu D."/>
            <person name="Zhang X."/>
            <person name="Ji Z."/>
            <person name="Zhao W."/>
            <person name="Sun Y."/>
            <person name="Zhang Z."/>
            <person name="Bao J."/>
            <person name="Han Y."/>
            <person name="Dong L."/>
            <person name="Ji J."/>
            <person name="Chen P."/>
            <person name="Wu S."/>
            <person name="Liu J."/>
            <person name="Xiao Y."/>
            <person name="Bu D."/>
            <person name="Tan J."/>
            <person name="Yang L."/>
            <person name="Ye C."/>
            <person name="Zhang J."/>
            <person name="Xu J."/>
            <person name="Zhou Y."/>
            <person name="Yu Y."/>
            <person name="Zhang B."/>
            <person name="Zhuang S."/>
            <person name="Wei H."/>
            <person name="Liu B."/>
            <person name="Lei M."/>
            <person name="Yu H."/>
            <person name="Li Y."/>
            <person name="Xu H."/>
            <person name="Wei S."/>
            <person name="He X."/>
            <person name="Fang L."/>
            <person name="Zhang Z."/>
            <person name="Zhang Y."/>
            <person name="Huang X."/>
            <person name="Su Z."/>
            <person name="Tong W."/>
            <person name="Li J."/>
            <person name="Tong Z."/>
            <person name="Li S."/>
            <person name="Ye J."/>
            <person name="Wang L."/>
            <person name="Fang L."/>
            <person name="Lei T."/>
            <person name="Chen C.-S."/>
            <person name="Chen H.-C."/>
            <person name="Xu Z."/>
            <person name="Li H."/>
            <person name="Huang H."/>
            <person name="Zhang F."/>
            <person name="Xu H."/>
            <person name="Li N."/>
            <person name="Zhao C."/>
            <person name="Li S."/>
            <person name="Dong L."/>
            <person name="Huang Y."/>
            <person name="Li L."/>
            <person name="Xi Y."/>
            <person name="Qi Q."/>
            <person name="Li W."/>
            <person name="Zhang B."/>
            <person name="Hu W."/>
            <person name="Zhang Y."/>
            <person name="Tian X."/>
            <person name="Jiao Y."/>
            <person name="Liang X."/>
            <person name="Jin J."/>
            <person name="Gao L."/>
            <person name="Zheng W."/>
            <person name="Hao B."/>
            <person name="Liu S.-M."/>
            <person name="Wang W."/>
            <person name="Yuan L."/>
            <person name="Cao M."/>
            <person name="McDermott J."/>
            <person name="Samudrala R."/>
            <person name="Wang J."/>
            <person name="Wong G.K.-S."/>
            <person name="Yang H."/>
        </authorList>
    </citation>
    <scope>NUCLEOTIDE SEQUENCE [LARGE SCALE GENOMIC DNA]</scope>
    <source>
        <strain>cv. Nipponbare</strain>
    </source>
</reference>
<reference key="6">
    <citation type="journal article" date="2003" name="Science">
        <title>Collection, mapping, and annotation of over 28,000 cDNA clones from japonica rice.</title>
        <authorList>
            <consortium name="The rice full-length cDNA consortium"/>
        </authorList>
    </citation>
    <scope>NUCLEOTIDE SEQUENCE [LARGE SCALE MRNA]</scope>
    <source>
        <strain>cv. Nipponbare</strain>
    </source>
</reference>
<organism>
    <name type="scientific">Oryza sativa subsp. japonica</name>
    <name type="common">Rice</name>
    <dbReference type="NCBI Taxonomy" id="39947"/>
    <lineage>
        <taxon>Eukaryota</taxon>
        <taxon>Viridiplantae</taxon>
        <taxon>Streptophyta</taxon>
        <taxon>Embryophyta</taxon>
        <taxon>Tracheophyta</taxon>
        <taxon>Spermatophyta</taxon>
        <taxon>Magnoliopsida</taxon>
        <taxon>Liliopsida</taxon>
        <taxon>Poales</taxon>
        <taxon>Poaceae</taxon>
        <taxon>BOP clade</taxon>
        <taxon>Oryzoideae</taxon>
        <taxon>Oryzeae</taxon>
        <taxon>Oryzinae</taxon>
        <taxon>Oryza</taxon>
        <taxon>Oryza sativa</taxon>
    </lineage>
</organism>
<evidence type="ECO:0000250" key="1"/>
<evidence type="ECO:0000255" key="2"/>
<evidence type="ECO:0000305" key="3"/>
<evidence type="ECO:0000312" key="4">
    <source>
        <dbReference type="EMBL" id="EEE63080.1"/>
    </source>
</evidence>
<accession>Q6I544</accession>
<accession>B9FJV3</accession>
<gene>
    <name type="ordered locus">Os05g0277500</name>
    <name type="ordered locus">LOC_Os05g19670</name>
    <name type="ORF">OsJ_017118</name>
    <name evidence="4" type="ORF">OsJ_17888</name>
    <name type="ORF">OSJNBa0055E23.9</name>
</gene>
<sequence>MARPSLPCAVVAVLLLALLPTPSTAGDPDLLQDICVADLTSAVKVNGFACKAAVTEDDFYFKGLAAAGNTNNTYGSVVTGANVEKLPGLNTLGVSMSRIDYAPGGLNPPHTHPRATEMVFVLQGTLDVGFITTANKLYTKTISAGDVFVFPRGLLHFQKNNGDTPAAVISAFNSQLPGTQSLAMTLFAASPEVPDGVLTKAFQVGTKEVEKIKSRLAPKKR</sequence>
<protein>
    <recommendedName>
        <fullName>Germin-like protein 5-1</fullName>
    </recommendedName>
</protein>
<name>GL52_ORYSJ</name>
<feature type="signal peptide" evidence="2">
    <location>
        <begin position="1"/>
        <end position="25"/>
    </location>
</feature>
<feature type="chain" id="PRO_0000365512" description="Germin-like protein 5-1">
    <location>
        <begin position="26"/>
        <end position="221"/>
    </location>
</feature>
<feature type="domain" description="Cupin type-1" evidence="2">
    <location>
        <begin position="62"/>
        <end position="210"/>
    </location>
</feature>
<feature type="binding site" evidence="1">
    <location>
        <position position="110"/>
    </location>
    <ligand>
        <name>Mn(2+)</name>
        <dbReference type="ChEBI" id="CHEBI:29035"/>
    </ligand>
</feature>
<feature type="binding site" evidence="1">
    <location>
        <position position="112"/>
    </location>
    <ligand>
        <name>Mn(2+)</name>
        <dbReference type="ChEBI" id="CHEBI:29035"/>
    </ligand>
</feature>
<feature type="binding site" evidence="1">
    <location>
        <position position="117"/>
    </location>
    <ligand>
        <name>Mn(2+)</name>
        <dbReference type="ChEBI" id="CHEBI:29035"/>
    </ligand>
</feature>
<feature type="binding site" evidence="1">
    <location>
        <position position="156"/>
    </location>
    <ligand>
        <name>Mn(2+)</name>
        <dbReference type="ChEBI" id="CHEBI:29035"/>
    </ligand>
</feature>
<feature type="glycosylation site" description="N-linked (GlcNAc...) asparagine" evidence="2">
    <location>
        <position position="71"/>
    </location>
</feature>
<feature type="disulfide bond" evidence="1">
    <location>
        <begin position="35"/>
        <end position="50"/>
    </location>
</feature>
<keyword id="KW-0052">Apoplast</keyword>
<keyword id="KW-1015">Disulfide bond</keyword>
<keyword id="KW-0325">Glycoprotein</keyword>
<keyword id="KW-0464">Manganese</keyword>
<keyword id="KW-0479">Metal-binding</keyword>
<keyword id="KW-1185">Reference proteome</keyword>
<keyword id="KW-0964">Secreted</keyword>
<keyword id="KW-0732">Signal</keyword>
<proteinExistence type="evidence at transcript level"/>
<dbReference type="EMBL" id="AC145273">
    <property type="protein sequence ID" value="AAT47457.1"/>
    <property type="molecule type" value="Genomic_DNA"/>
</dbReference>
<dbReference type="EMBL" id="AP008211">
    <property type="protein sequence ID" value="BAF16995.1"/>
    <property type="molecule type" value="Genomic_DNA"/>
</dbReference>
<dbReference type="EMBL" id="AP014961">
    <property type="protein sequence ID" value="BAS93125.1"/>
    <property type="molecule type" value="Genomic_DNA"/>
</dbReference>
<dbReference type="EMBL" id="CM000142">
    <property type="protein sequence ID" value="EAZ33635.1"/>
    <property type="molecule type" value="Genomic_DNA"/>
</dbReference>
<dbReference type="EMBL" id="CM000142">
    <property type="protein sequence ID" value="EEE63080.1"/>
    <property type="molecule type" value="Genomic_DNA"/>
</dbReference>
<dbReference type="EMBL" id="AK105351">
    <property type="protein sequence ID" value="BAG97206.1"/>
    <property type="molecule type" value="mRNA"/>
</dbReference>
<dbReference type="RefSeq" id="XP_015638422.1">
    <property type="nucleotide sequence ID" value="XM_015782936.1"/>
</dbReference>
<dbReference type="SMR" id="Q6I544"/>
<dbReference type="FunCoup" id="Q6I544">
    <property type="interactions" value="46"/>
</dbReference>
<dbReference type="STRING" id="39947.Q6I544"/>
<dbReference type="PaxDb" id="39947-Q6I544"/>
<dbReference type="EnsemblPlants" id="Os05t0277500-01">
    <property type="protein sequence ID" value="Os05t0277500-01"/>
    <property type="gene ID" value="Os05g0277500"/>
</dbReference>
<dbReference type="Gramene" id="Os05t0277500-01">
    <property type="protein sequence ID" value="Os05t0277500-01"/>
    <property type="gene ID" value="Os05g0277500"/>
</dbReference>
<dbReference type="KEGG" id="dosa:Os05g0277500"/>
<dbReference type="eggNOG" id="ENOG502QQ4A">
    <property type="taxonomic scope" value="Eukaryota"/>
</dbReference>
<dbReference type="HOGENOM" id="CLU_015790_0_3_1"/>
<dbReference type="InParanoid" id="Q6I544"/>
<dbReference type="OMA" id="EFNPDCG"/>
<dbReference type="OrthoDB" id="1921208at2759"/>
<dbReference type="Proteomes" id="UP000000763">
    <property type="component" value="Chromosome 5"/>
</dbReference>
<dbReference type="Proteomes" id="UP000007752">
    <property type="component" value="Chromosome 5"/>
</dbReference>
<dbReference type="Proteomes" id="UP000059680">
    <property type="component" value="Chromosome 5"/>
</dbReference>
<dbReference type="GO" id="GO:0048046">
    <property type="term" value="C:apoplast"/>
    <property type="evidence" value="ECO:0007669"/>
    <property type="project" value="UniProtKB-SubCell"/>
</dbReference>
<dbReference type="GO" id="GO:0009506">
    <property type="term" value="C:plasmodesma"/>
    <property type="evidence" value="ECO:0000318"/>
    <property type="project" value="GO_Central"/>
</dbReference>
<dbReference type="GO" id="GO:0030145">
    <property type="term" value="F:manganese ion binding"/>
    <property type="evidence" value="ECO:0007669"/>
    <property type="project" value="InterPro"/>
</dbReference>
<dbReference type="GO" id="GO:0010497">
    <property type="term" value="P:plasmodesmata-mediated intercellular transport"/>
    <property type="evidence" value="ECO:0000318"/>
    <property type="project" value="GO_Central"/>
</dbReference>
<dbReference type="GO" id="GO:2000280">
    <property type="term" value="P:regulation of root development"/>
    <property type="evidence" value="ECO:0000318"/>
    <property type="project" value="GO_Central"/>
</dbReference>
<dbReference type="CDD" id="cd02241">
    <property type="entry name" value="cupin_OxOx"/>
    <property type="match status" value="1"/>
</dbReference>
<dbReference type="FunFam" id="2.60.120.10:FF:000025">
    <property type="entry name" value="germin-like protein subfamily 2 member 1"/>
    <property type="match status" value="1"/>
</dbReference>
<dbReference type="Gene3D" id="2.60.120.10">
    <property type="entry name" value="Jelly Rolls"/>
    <property type="match status" value="1"/>
</dbReference>
<dbReference type="InterPro" id="IPR006045">
    <property type="entry name" value="Cupin_1"/>
</dbReference>
<dbReference type="InterPro" id="IPR001929">
    <property type="entry name" value="Germin"/>
</dbReference>
<dbReference type="InterPro" id="IPR019780">
    <property type="entry name" value="Germin_Mn-BS"/>
</dbReference>
<dbReference type="InterPro" id="IPR014710">
    <property type="entry name" value="RmlC-like_jellyroll"/>
</dbReference>
<dbReference type="InterPro" id="IPR011051">
    <property type="entry name" value="RmlC_Cupin_sf"/>
</dbReference>
<dbReference type="PANTHER" id="PTHR31238">
    <property type="entry name" value="GERMIN-LIKE PROTEIN SUBFAMILY 3 MEMBER 3"/>
    <property type="match status" value="1"/>
</dbReference>
<dbReference type="Pfam" id="PF00190">
    <property type="entry name" value="Cupin_1"/>
    <property type="match status" value="1"/>
</dbReference>
<dbReference type="PRINTS" id="PR00325">
    <property type="entry name" value="GERMIN"/>
</dbReference>
<dbReference type="SMART" id="SM00835">
    <property type="entry name" value="Cupin_1"/>
    <property type="match status" value="1"/>
</dbReference>
<dbReference type="SUPFAM" id="SSF51182">
    <property type="entry name" value="RmlC-like cupins"/>
    <property type="match status" value="1"/>
</dbReference>
<dbReference type="PROSITE" id="PS00725">
    <property type="entry name" value="GERMIN"/>
    <property type="match status" value="1"/>
</dbReference>
<comment type="function">
    <text>May play a role in plant defense. Probably has no oxalate oxidase activity even if the active site is conserved.</text>
</comment>
<comment type="subunit">
    <text evidence="1">Oligomer (believed to be a pentamer but probably hexamer).</text>
</comment>
<comment type="subcellular location">
    <subcellularLocation>
        <location evidence="1">Secreted</location>
        <location evidence="1">Extracellular space</location>
        <location evidence="1">Apoplast</location>
    </subcellularLocation>
</comment>
<comment type="similarity">
    <text evidence="3">Belongs to the germin family.</text>
</comment>